<organism>
    <name type="scientific">Streptococcus pyogenes serotype M3 (strain SSI-1)</name>
    <dbReference type="NCBI Taxonomy" id="193567"/>
    <lineage>
        <taxon>Bacteria</taxon>
        <taxon>Bacillati</taxon>
        <taxon>Bacillota</taxon>
        <taxon>Bacilli</taxon>
        <taxon>Lactobacillales</taxon>
        <taxon>Streptococcaceae</taxon>
        <taxon>Streptococcus</taxon>
    </lineage>
</organism>
<comment type="function">
    <text evidence="1">Plays a major role in protein secretion by helping the post-translocational extracellular folding of several secreted proteins.</text>
</comment>
<comment type="catalytic activity">
    <reaction>
        <text>[protein]-peptidylproline (omega=180) = [protein]-peptidylproline (omega=0)</text>
        <dbReference type="Rhea" id="RHEA:16237"/>
        <dbReference type="Rhea" id="RHEA-COMP:10747"/>
        <dbReference type="Rhea" id="RHEA-COMP:10748"/>
        <dbReference type="ChEBI" id="CHEBI:83833"/>
        <dbReference type="ChEBI" id="CHEBI:83834"/>
        <dbReference type="EC" id="5.2.1.8"/>
    </reaction>
</comment>
<comment type="subcellular location">
    <subcellularLocation>
        <location evidence="3">Cell membrane</location>
        <topology evidence="3">Lipid-anchor</topology>
    </subcellularLocation>
</comment>
<comment type="similarity">
    <text evidence="3">Belongs to the PrsA family.</text>
</comment>
<dbReference type="EC" id="5.2.1.8"/>
<dbReference type="EMBL" id="BA000034">
    <property type="protein sequence ID" value="BAC64831.1"/>
    <property type="molecule type" value="Genomic_DNA"/>
</dbReference>
<dbReference type="SMR" id="P0DD45"/>
<dbReference type="KEGG" id="sps:SPs1736"/>
<dbReference type="HOGENOM" id="CLU_034646_6_0_9"/>
<dbReference type="GO" id="GO:0005886">
    <property type="term" value="C:plasma membrane"/>
    <property type="evidence" value="ECO:0007669"/>
    <property type="project" value="UniProtKB-SubCell"/>
</dbReference>
<dbReference type="GO" id="GO:0003755">
    <property type="term" value="F:peptidyl-prolyl cis-trans isomerase activity"/>
    <property type="evidence" value="ECO:0007669"/>
    <property type="project" value="UniProtKB-UniRule"/>
</dbReference>
<dbReference type="GO" id="GO:0006457">
    <property type="term" value="P:protein folding"/>
    <property type="evidence" value="ECO:0007669"/>
    <property type="project" value="UniProtKB-UniRule"/>
</dbReference>
<dbReference type="Gene3D" id="3.10.50.40">
    <property type="match status" value="1"/>
</dbReference>
<dbReference type="Gene3D" id="1.10.4030.10">
    <property type="entry name" value="Porin chaperone SurA, peptide-binding domain"/>
    <property type="match status" value="1"/>
</dbReference>
<dbReference type="HAMAP" id="MF_01145">
    <property type="entry name" value="Foldase_PrsA"/>
    <property type="match status" value="1"/>
</dbReference>
<dbReference type="InterPro" id="IPR023059">
    <property type="entry name" value="Foldase_PrsA"/>
</dbReference>
<dbReference type="InterPro" id="IPR046357">
    <property type="entry name" value="PPIase_dom_sf"/>
</dbReference>
<dbReference type="InterPro" id="IPR000297">
    <property type="entry name" value="PPIase_PpiC"/>
</dbReference>
<dbReference type="InterPro" id="IPR050245">
    <property type="entry name" value="PrsA_foldase"/>
</dbReference>
<dbReference type="InterPro" id="IPR027304">
    <property type="entry name" value="Trigger_fact/SurA_dom_sf"/>
</dbReference>
<dbReference type="NCBIfam" id="NF002361">
    <property type="entry name" value="PRK01326.1"/>
    <property type="match status" value="1"/>
</dbReference>
<dbReference type="NCBIfam" id="NF009105">
    <property type="entry name" value="PRK12450.1"/>
    <property type="match status" value="1"/>
</dbReference>
<dbReference type="PANTHER" id="PTHR47245:SF1">
    <property type="entry name" value="FOLDASE PROTEIN PRSA"/>
    <property type="match status" value="1"/>
</dbReference>
<dbReference type="PANTHER" id="PTHR47245">
    <property type="entry name" value="PEPTIDYLPROLYL ISOMERASE"/>
    <property type="match status" value="1"/>
</dbReference>
<dbReference type="Pfam" id="PF13145">
    <property type="entry name" value="Rotamase_2"/>
    <property type="match status" value="1"/>
</dbReference>
<dbReference type="SUPFAM" id="SSF54534">
    <property type="entry name" value="FKBP-like"/>
    <property type="match status" value="1"/>
</dbReference>
<dbReference type="SUPFAM" id="SSF109998">
    <property type="entry name" value="Triger factor/SurA peptide-binding domain-like"/>
    <property type="match status" value="1"/>
</dbReference>
<dbReference type="PROSITE" id="PS50198">
    <property type="entry name" value="PPIC_PPIASE_2"/>
    <property type="match status" value="1"/>
</dbReference>
<dbReference type="PROSITE" id="PS51257">
    <property type="entry name" value="PROKAR_LIPOPROTEIN"/>
    <property type="match status" value="1"/>
</dbReference>
<accession>P0DD45</accession>
<accession>Q8K5P3</accession>
<protein>
    <recommendedName>
        <fullName>Foldase protein PrsA 2</fullName>
        <ecNumber>5.2.1.8</ecNumber>
    </recommendedName>
</protein>
<reference key="1">
    <citation type="journal article" date="2003" name="Genome Res.">
        <title>Genome sequence of an M3 strain of Streptococcus pyogenes reveals a large-scale genomic rearrangement in invasive strains and new insights into phage evolution.</title>
        <authorList>
            <person name="Nakagawa I."/>
            <person name="Kurokawa K."/>
            <person name="Yamashita A."/>
            <person name="Nakata M."/>
            <person name="Tomiyasu Y."/>
            <person name="Okahashi N."/>
            <person name="Kawabata S."/>
            <person name="Yamazaki K."/>
            <person name="Shiba T."/>
            <person name="Yasunaga T."/>
            <person name="Hayashi H."/>
            <person name="Hattori M."/>
            <person name="Hamada S."/>
        </authorList>
    </citation>
    <scope>NUCLEOTIDE SEQUENCE [LARGE SCALE GENOMIC DNA]</scope>
    <source>
        <strain>SSI-1</strain>
    </source>
</reference>
<gene>
    <name type="primary">prsA2</name>
    <name type="ordered locus">SPs1736</name>
</gene>
<name>PRSA2_STRPQ</name>
<feature type="signal peptide" evidence="2">
    <location>
        <begin position="1"/>
        <end position="22"/>
    </location>
</feature>
<feature type="chain" id="PRO_0000411462" description="Foldase protein PrsA 2">
    <location>
        <begin position="23"/>
        <end position="309"/>
    </location>
</feature>
<feature type="domain" description="PpiC">
    <location>
        <begin position="146"/>
        <end position="241"/>
    </location>
</feature>
<feature type="lipid moiety-binding region" description="N-palmitoyl cysteine" evidence="2">
    <location>
        <position position="23"/>
    </location>
</feature>
<feature type="lipid moiety-binding region" description="S-diacylglycerol cysteine" evidence="2">
    <location>
        <position position="23"/>
    </location>
</feature>
<keyword id="KW-1003">Cell membrane</keyword>
<keyword id="KW-0413">Isomerase</keyword>
<keyword id="KW-0449">Lipoprotein</keyword>
<keyword id="KW-0472">Membrane</keyword>
<keyword id="KW-0564">Palmitate</keyword>
<keyword id="KW-0697">Rotamase</keyword>
<keyword id="KW-0732">Signal</keyword>
<sequence length="309" mass="34361">MKQMNKLITGVVTLATVVTLSACQSSHNNTKLVSMKGDTITVSDFYNETKNTELAQKAMLSLVISRVFETQYANKVSDKEVEKAYKQTADQYGTSFKTVLAQSGLTPETYKKQIRLTKLVEYAVKEQAKNETISKKDYRQAYDAYTPTMTAEIMQFEKEEDAKAALEAVKAEGADFAAIAKEKTIAADKKTTYTFDSGETTLPAEVVRAASGLKEGNRSEIITALDPATSKRTYHIIKVTKKATKKADWKAYQKRLKDIIVTGKLKDPDFQNKVIAKALDKANVKIKDKAFANILAQFAKPNQKQPAQK</sequence>
<proteinExistence type="inferred from homology"/>
<evidence type="ECO:0000250" key="1"/>
<evidence type="ECO:0000255" key="2"/>
<evidence type="ECO:0000305" key="3"/>